<evidence type="ECO:0000256" key="1">
    <source>
        <dbReference type="SAM" id="MobiDB-lite"/>
    </source>
</evidence>
<evidence type="ECO:0000269" key="2">
    <source>
    </source>
</evidence>
<evidence type="ECO:0000269" key="3">
    <source>
    </source>
</evidence>
<evidence type="ECO:0000269" key="4">
    <source>
    </source>
</evidence>
<evidence type="ECO:0000269" key="5">
    <source>
    </source>
</evidence>
<evidence type="ECO:0000269" key="6">
    <source>
    </source>
</evidence>
<evidence type="ECO:0000269" key="7">
    <source>
    </source>
</evidence>
<evidence type="ECO:0000269" key="8">
    <source>
    </source>
</evidence>
<evidence type="ECO:0000303" key="9">
    <source>
    </source>
</evidence>
<evidence type="ECO:0000305" key="10"/>
<evidence type="ECO:0007829" key="11">
    <source>
        <dbReference type="PDB" id="4XDN"/>
    </source>
</evidence>
<evidence type="ECO:0007829" key="12">
    <source>
        <dbReference type="PDB" id="5W94"/>
    </source>
</evidence>
<evidence type="ECO:0007829" key="13">
    <source>
        <dbReference type="PDB" id="6ZZ6"/>
    </source>
</evidence>
<feature type="chain" id="PRO_0000218603" description="Sister chromatid cohesion protein 2">
    <location>
        <begin position="1"/>
        <end position="1493"/>
    </location>
</feature>
<feature type="repeat" description="HEAT 1">
    <location>
        <begin position="695"/>
        <end position="732"/>
    </location>
</feature>
<feature type="repeat" description="HEAT 2">
    <location>
        <begin position="734"/>
        <end position="771"/>
    </location>
</feature>
<feature type="repeat" description="HEAT 3">
    <location>
        <begin position="806"/>
        <end position="843"/>
    </location>
</feature>
<feature type="repeat" description="HEAT 4">
    <location>
        <begin position="1132"/>
        <end position="1169"/>
    </location>
</feature>
<feature type="repeat" description="HEAT 5">
    <location>
        <begin position="1244"/>
        <end position="1281"/>
    </location>
</feature>
<feature type="region of interest" description="Disordered" evidence="1">
    <location>
        <begin position="151"/>
        <end position="170"/>
    </location>
</feature>
<feature type="modified residue" description="Phosphoserine; in mutant scc2-8A" evidence="7">
    <location>
        <position position="43"/>
    </location>
</feature>
<feature type="modified residue" description="Phosphothreonine" evidence="7">
    <location>
        <position position="67"/>
    </location>
</feature>
<feature type="modified residue" description="Phosphoserine; in mutant scc2-8A" evidence="7">
    <location>
        <position position="74"/>
    </location>
</feature>
<feature type="modified residue" description="Phosphoserine" evidence="7">
    <location>
        <position position="127"/>
    </location>
</feature>
<feature type="modified residue" description="Phosphoserine" evidence="7">
    <location>
        <position position="157"/>
    </location>
</feature>
<feature type="modified residue" description="Phosphoserine; in mutant scc2-8A" evidence="7">
    <location>
        <position position="162"/>
    </location>
</feature>
<feature type="modified residue" description="Phosphoserine" evidence="7">
    <location>
        <position position="163"/>
    </location>
</feature>
<feature type="modified residue" description="Phosphothreonine" evidence="7">
    <location>
        <position position="231"/>
    </location>
</feature>
<feature type="modified residue" description="Phosphothreonine" evidence="7">
    <location>
        <position position="236"/>
    </location>
</feature>
<feature type="modified residue" description="Phosphoserine" evidence="7">
    <location>
        <position position="305"/>
    </location>
</feature>
<feature type="modified residue" description="Phosphoserine" evidence="7">
    <location>
        <position position="320"/>
    </location>
</feature>
<feature type="modified residue" description="Phosphothreonine; in mutant scc2-8A" evidence="7">
    <location>
        <position position="360"/>
    </location>
</feature>
<feature type="modified residue" description="Phosphoserine" evidence="7">
    <location>
        <position position="753"/>
    </location>
</feature>
<feature type="modified residue" description="Phosphoserine; in mutant scc2-8A" evidence="7">
    <location>
        <position position="1179"/>
    </location>
</feature>
<feature type="modified residue" description="Phosphoserine" evidence="7">
    <location>
        <position position="1182"/>
    </location>
</feature>
<feature type="modified residue" description="Phosphoserine; in mutant scc2-8A" evidence="7">
    <location>
        <position position="1183"/>
    </location>
</feature>
<feature type="modified residue" description="Phosphoserine" evidence="7">
    <location>
        <position position="1185"/>
    </location>
</feature>
<feature type="mutagenesis site" description="In scc2-8A; mimics unphosphorylated form and leads to novel phosphorylation sites at Ser-43, Ser-74, Ser-162, Ser-360, Ser-1179 and Ser-1183; when associated with A-127; A-157; A-163; A-231; A-236; A-305 and A-320." evidence="7">
    <original>T</original>
    <variation>A</variation>
    <location>
        <position position="67"/>
    </location>
</feature>
<feature type="mutagenesis site" description="In scc2-8E; mimics constitutive phosphorylation, retains normal SCC2-SCC4 interactions and chromatin association, but exhibits decreased viability, sensitivity to genotoxic agents methyl methanesulfonate (MMS) and hydroxyurea (HU), and decreased stability of the MCD1 cohesin subunit in mitotic cells; when associated with E-127; E-157; E-163; E-231; E-236; E-305 and E-320." evidence="7">
    <original>T</original>
    <variation>E</variation>
    <location>
        <position position="67"/>
    </location>
</feature>
<feature type="mutagenesis site" description="In scc2-8A; mimics unphosphorylated form and leads to novel phosphorylation sites at Ser-43, Ser-74, Ser-162, Ser-360, Ser-1179 and Ser-1183; when associated with A-67; A-157; A-163; A-231; A-236; A-305 and A-320." evidence="7">
    <original>S</original>
    <variation>A</variation>
    <location>
        <position position="127"/>
    </location>
</feature>
<feature type="mutagenesis site" description="In scc2-8E; mimics constitutive phosphorylation, retains normal SCC2-SCC4 interactions and chromatin association, but exhibits decreased viability, sensitivity to genotoxic agents methyl methanesulfonate (MMS) and hydroxyurea (HU), and decreased stability of the MCD1 cohesin subunit in mitotic cells; when associated with E-67; E-157; E-163; E-231; E-236; E-305 and E-320." evidence="7">
    <original>S</original>
    <variation>E</variation>
    <location>
        <position position="127"/>
    </location>
</feature>
<feature type="mutagenesis site" description="In scc2-8A; mimics unphosphorylated form and leads to novel phosphorylation sites at Ser-43, Ser-74, Ser-162, Ser-360, Ser-1179 and Ser-1183; when associated with A-67; A-127; A-163; A-231; A-236; A-305 and A-320." evidence="7">
    <original>S</original>
    <variation>A</variation>
    <location>
        <position position="157"/>
    </location>
</feature>
<feature type="mutagenesis site" description="In scc2-8E; mimics constitutive phosphorylation, retains normal SCC2-SCC4 interactions and chromatin association, but exhibits decreased viability, sensitivity to genotoxic agents methyl methanesulfonate (MMS) and hydroxyurea (HU), and decreased stability of the MCD1 cohesin subunit in mitotic cells; when associated with E-67; E-127; E-163; E-231; E-236; E-305 and E-320." evidence="7">
    <original>S</original>
    <variation>E</variation>
    <location>
        <position position="157"/>
    </location>
</feature>
<feature type="mutagenesis site" description="In scc2-8A; mimics unphosphorylated form and leads to novel phosphorylation sites at Ser-43, Ser-74, Ser-162, Ser-360, Ser-1179 and Ser-1183; when associated with A-67; A-127; A-157; A-231; A-236; A-305 and A-320." evidence="7">
    <original>S</original>
    <variation>A</variation>
    <location>
        <position position="163"/>
    </location>
</feature>
<feature type="mutagenesis site" description="In scc2-8E; mimics constitutive phosphorylation, retains normal SCC2-SCC4 interactions and chromatin association, but exhibits decreased viability, sensitivity to genotoxic agents methyl methanesulfonate (MMS) and hydroxyurea (HU), and decreased stability of the MCD1 cohesin subunit in mitotic cells; when associated with E-67; E-127; E-157; E-231; E-236; E-305 and E-320." evidence="7">
    <original>S</original>
    <variation>E</variation>
    <location>
        <position position="163"/>
    </location>
</feature>
<feature type="mutagenesis site" description="In scc2-8A; mimics unphosphorylated form and leads to novel phosphorylation sites at Ser-43, Ser-74, Ser-162, Ser-360, Ser-1179 and Ser-1183; when associated with A-67; A-127; A-157; A-163; A-236; A-305 and A-320." evidence="7">
    <original>T</original>
    <variation>A</variation>
    <location>
        <position position="231"/>
    </location>
</feature>
<feature type="mutagenesis site" description="In scc2-8E; mimics constitutive phosphorylation, retains normal SCC2-SCC4 interactions and chromatin association, but exhibits decreased viability, sensitivity to genotoxic agents methyl methanesulfonate (MMS) and hydroxyurea (HU), and decreased stability of the MCD1 cohesin subunit in mitotic cells; when associated with E-67; E-127; E-157; E-163; E-236; E-305 and E-320. In scc2-2NE; mimics constitutive phosphorylation, retains normal SCC2-SCC4 interactions and chromatin association, but exhibits decreased viability, sensitivity to genotoxic agents methyl methanesulfonate (MMS) and hydroxyurea (HU), and decreased stability of the MCD1 cohesin subunit in mitotic cells; when associated with E-236; E-305 and E-320." evidence="7">
    <original>T</original>
    <variation>E</variation>
    <location>
        <position position="231"/>
    </location>
</feature>
<feature type="mutagenesis site" description="In scc2-8A; mimics unphosphorylated form and leads to novel phosphorylation sites at Ser-43, Ser-74, Ser-162, Ser-360, Ser-1179 and Ser-1183; when associated with A-67; A-127; A-157; A-163; A-231; A-305 and A-320." evidence="7">
    <original>T</original>
    <variation>A</variation>
    <location>
        <position position="236"/>
    </location>
</feature>
<feature type="mutagenesis site" description="In scc2-8E; mimics constitutive phosphorylation, retains normal SCC2-SCC4 interactions and chromatin association, but exhibits decreased viability, sensitivity to genotoxic agents methyl methanesulfonate (MMS) and hydroxyurea (HU), and decreased stability of the MCD1 cohesin subunit in mitotic cells; when associated with E-67; E-127; E-157; E-163; E-231; E-305 and E-320. In scc2-2NE; mimics constitutive phosphorylation, retains normal SCC2-SCC4 interactions and chromatin association, but exhibits decreased viability, sensitivity to genotoxic agents methyl methanesulfonate (MMS) and hydroxyurea (HU), and decreased stability of the MCD1 cohesin subunit in mitotic cells; when associated with E-231; E-305 and E-320." evidence="7">
    <original>T</original>
    <variation>E</variation>
    <location>
        <position position="236"/>
    </location>
</feature>
<feature type="mutagenesis site" description="In scc2-8A; mimics unphosphorylated form and leads to novel phosphorylation sites at Ser-43; S-74; S-162; S-360; S-1179 and Ser-1183; when associated with A-67; A-127; A-157; A-163; A-231; A-236 and A-320." evidence="7">
    <original>S</original>
    <variation>A</variation>
    <location>
        <position position="305"/>
    </location>
</feature>
<feature type="mutagenesis site" description="In scc2-8E; mimics constitutive phosphorylation, retains normal SCC2-SCC4 interactions and chromatin association, but exhibits decreased viability, sensitivity to genotoxic agents methyl methanesulfonate (MMS) and hydroxyurea (HU), and decreased stability of the MCD1 cohesin subunit in mitotic cells; when associated with E-67; E-127; E-157; E-163; E-231; E-236 and E-320. In scc2-2NE; mimics constitutive phosphorylation, retains normal SCC2-SCC4 interactions and chromatin association, but exhibits decreased viability, sensitivity to genotoxic agents methyl methanesulfonate (MMS) and hydroxyurea (HU), and decreased stability of the MCD1 cohesin subunit in mitotic cells; when associated with E-231; E-236 and E-320." evidence="7">
    <original>S</original>
    <variation>E</variation>
    <location>
        <position position="305"/>
    </location>
</feature>
<feature type="mutagenesis site" description="In scc2-8A; mimics unphosphorylated form and leads to novel phosphorylation sites at S-43; S-74; S-162; S-360; S-1179 and S-1183; when associated with A-67; A-127; A-157; A-163; A-231; A-236 and A-305." evidence="7">
    <original>S</original>
    <variation>A</variation>
    <location>
        <position position="320"/>
    </location>
</feature>
<feature type="mutagenesis site" description="In scc2-8E; mimics constitutive phosphorylation, retains normal SCC2-SCC4 interactions and chromatin association, but exhibits decreased viability, sensitivity to genotoxic agents methyl methanesulfonate (MMS) and hydroxyurea (HU), and decreased stability of the MCD1 cohesin subunit in mitotic cells; when associated with E-67; E-127; E-157; E-163; E-231; E-236 and E-305. In scc2-2NE; mimics constitutive phosphorylation, retains normal SCC2-SCC4 interactions and chromatin association, but exhibits decreased viability, sensitivity to genotoxic agents methyl methanesulfonate (MMS) and hydroxyurea (HU), and decreased stability of the MCD1 cohesin subunit in mitotic cells; when associated with E-231; E-236 and E-305." evidence="7">
    <original>S</original>
    <variation>E</variation>
    <location>
        <position position="320"/>
    </location>
</feature>
<feature type="mutagenesis site" description="Mimics constitutive phosphorylation and causes inviability through protein instability." evidence="7">
    <original>S</original>
    <variation>E</variation>
    <location>
        <position position="753"/>
    </location>
</feature>
<feature type="mutagenesis site" description="In scc2-CE; mimics constitutive phosphorylation, retains normal SCC2-SCC4 interactions and chromatin association, but exhibits decreased viability, sensitivity to genotoxic agents methyl methanesulfonate (MMS) and hydroxyurea (HU); when associated with E-1185." evidence="7">
    <original>S</original>
    <variation>E</variation>
    <location>
        <position position="1182"/>
    </location>
</feature>
<feature type="mutagenesis site" description="In scc2-CE; mimics constitutive phosphorylation, retains normal SCC2-SCC4 interactions and chromatin association, but exhibits decreased viability, sensitivity to genotoxic agents methyl methanesulfonate (MMS) and hydroxyurea (HU); when associated with E-1182." evidence="7">
    <original>S</original>
    <variation>E</variation>
    <location>
        <position position="1185"/>
    </location>
</feature>
<feature type="turn" evidence="11">
    <location>
        <begin position="4"/>
        <end position="7"/>
    </location>
</feature>
<feature type="helix" evidence="11">
    <location>
        <begin position="14"/>
        <end position="17"/>
    </location>
</feature>
<feature type="turn" evidence="11">
    <location>
        <begin position="18"/>
        <end position="20"/>
    </location>
</feature>
<feature type="helix" evidence="11">
    <location>
        <begin position="32"/>
        <end position="37"/>
    </location>
</feature>
<feature type="strand" evidence="11">
    <location>
        <begin position="41"/>
        <end position="43"/>
    </location>
</feature>
<feature type="strand" evidence="11">
    <location>
        <begin position="59"/>
        <end position="61"/>
    </location>
</feature>
<feature type="helix" evidence="11">
    <location>
        <begin position="79"/>
        <end position="81"/>
    </location>
</feature>
<feature type="strand" evidence="11">
    <location>
        <begin position="85"/>
        <end position="87"/>
    </location>
</feature>
<feature type="turn" evidence="11">
    <location>
        <begin position="106"/>
        <end position="109"/>
    </location>
</feature>
<feature type="helix" evidence="11">
    <location>
        <begin position="112"/>
        <end position="120"/>
    </location>
</feature>
<feature type="turn" evidence="12">
    <location>
        <begin position="121"/>
        <end position="124"/>
    </location>
</feature>
<feature type="strand" evidence="11">
    <location>
        <begin position="128"/>
        <end position="130"/>
    </location>
</feature>
<feature type="helix" evidence="13">
    <location>
        <begin position="222"/>
        <end position="235"/>
    </location>
</feature>
<feature type="helix" evidence="13">
    <location>
        <begin position="251"/>
        <end position="261"/>
    </location>
</feature>
<feature type="helix" evidence="13">
    <location>
        <begin position="279"/>
        <end position="290"/>
    </location>
</feature>
<feature type="helix" evidence="13">
    <location>
        <begin position="305"/>
        <end position="321"/>
    </location>
</feature>
<feature type="helix" evidence="13">
    <location>
        <begin position="339"/>
        <end position="351"/>
    </location>
</feature>
<feature type="helix" evidence="13">
    <location>
        <begin position="357"/>
        <end position="372"/>
    </location>
</feature>
<feature type="helix" evidence="13">
    <location>
        <begin position="387"/>
        <end position="405"/>
    </location>
</feature>
<feature type="helix" evidence="13">
    <location>
        <begin position="410"/>
        <end position="419"/>
    </location>
</feature>
<feature type="helix" evidence="13">
    <location>
        <begin position="420"/>
        <end position="423"/>
    </location>
</feature>
<feature type="helix" evidence="13">
    <location>
        <begin position="445"/>
        <end position="455"/>
    </location>
</feature>
<feature type="helix" evidence="13">
    <location>
        <begin position="460"/>
        <end position="465"/>
    </location>
</feature>
<feature type="helix" evidence="13">
    <location>
        <begin position="476"/>
        <end position="505"/>
    </location>
</feature>
<feature type="turn" evidence="13">
    <location>
        <begin position="507"/>
        <end position="509"/>
    </location>
</feature>
<feature type="helix" evidence="13">
    <location>
        <begin position="511"/>
        <end position="523"/>
    </location>
</feature>
<feature type="helix" evidence="13">
    <location>
        <begin position="532"/>
        <end position="547"/>
    </location>
</feature>
<feature type="helix" evidence="13">
    <location>
        <begin position="556"/>
        <end position="578"/>
    </location>
</feature>
<feature type="helix" evidence="13">
    <location>
        <begin position="598"/>
        <end position="615"/>
    </location>
</feature>
<feature type="helix" evidence="13">
    <location>
        <begin position="619"/>
        <end position="633"/>
    </location>
</feature>
<feature type="helix" evidence="13">
    <location>
        <begin position="648"/>
        <end position="661"/>
    </location>
</feature>
<feature type="helix" evidence="13">
    <location>
        <begin position="679"/>
        <end position="687"/>
    </location>
</feature>
<feature type="turn" evidence="13">
    <location>
        <begin position="688"/>
        <end position="690"/>
    </location>
</feature>
<feature type="helix" evidence="13">
    <location>
        <begin position="692"/>
        <end position="695"/>
    </location>
</feature>
<feature type="helix" evidence="13">
    <location>
        <begin position="697"/>
        <end position="708"/>
    </location>
</feature>
<feature type="helix" evidence="13">
    <location>
        <begin position="713"/>
        <end position="729"/>
    </location>
</feature>
<feature type="turn" evidence="13">
    <location>
        <begin position="731"/>
        <end position="734"/>
    </location>
</feature>
<feature type="helix" evidence="13">
    <location>
        <begin position="737"/>
        <end position="748"/>
    </location>
</feature>
<feature type="helix" evidence="13">
    <location>
        <begin position="752"/>
        <end position="764"/>
    </location>
</feature>
<feature type="helix" evidence="13">
    <location>
        <begin position="769"/>
        <end position="771"/>
    </location>
</feature>
<feature type="helix" evidence="13">
    <location>
        <begin position="772"/>
        <end position="777"/>
    </location>
</feature>
<feature type="turn" evidence="13">
    <location>
        <begin position="778"/>
        <end position="780"/>
    </location>
</feature>
<feature type="helix" evidence="13">
    <location>
        <begin position="784"/>
        <end position="800"/>
    </location>
</feature>
<feature type="helix" evidence="13">
    <location>
        <begin position="804"/>
        <end position="816"/>
    </location>
</feature>
<feature type="helix" evidence="13">
    <location>
        <begin position="823"/>
        <end position="837"/>
    </location>
</feature>
<feature type="helix" evidence="13">
    <location>
        <begin position="839"/>
        <end position="844"/>
    </location>
</feature>
<feature type="turn" evidence="13">
    <location>
        <begin position="848"/>
        <end position="850"/>
    </location>
</feature>
<feature type="helix" evidence="13">
    <location>
        <begin position="851"/>
        <end position="865"/>
    </location>
</feature>
<feature type="strand" evidence="13">
    <location>
        <begin position="867"/>
        <end position="869"/>
    </location>
</feature>
<feature type="helix" evidence="13">
    <location>
        <begin position="871"/>
        <end position="882"/>
    </location>
</feature>
<feature type="turn" evidence="13">
    <location>
        <begin position="883"/>
        <end position="885"/>
    </location>
</feature>
<feature type="turn" evidence="13">
    <location>
        <begin position="887"/>
        <end position="889"/>
    </location>
</feature>
<feature type="helix" evidence="13">
    <location>
        <begin position="893"/>
        <end position="916"/>
    </location>
</feature>
<feature type="helix" evidence="13">
    <location>
        <begin position="928"/>
        <end position="941"/>
    </location>
</feature>
<feature type="strand" evidence="13">
    <location>
        <begin position="943"/>
        <end position="945"/>
    </location>
</feature>
<feature type="helix" evidence="13">
    <location>
        <begin position="950"/>
        <end position="961"/>
    </location>
</feature>
<feature type="helix" evidence="13">
    <location>
        <begin position="968"/>
        <end position="980"/>
    </location>
</feature>
<feature type="helix" evidence="13">
    <location>
        <begin position="988"/>
        <end position="1000"/>
    </location>
</feature>
<feature type="turn" evidence="13">
    <location>
        <begin position="1001"/>
        <end position="1004"/>
    </location>
</feature>
<feature type="helix" evidence="13">
    <location>
        <begin position="1007"/>
        <end position="1021"/>
    </location>
</feature>
<feature type="strand" evidence="13">
    <location>
        <begin position="1024"/>
        <end position="1026"/>
    </location>
</feature>
<feature type="helix" evidence="13">
    <location>
        <begin position="1028"/>
        <end position="1048"/>
    </location>
</feature>
<feature type="helix" evidence="13">
    <location>
        <begin position="1061"/>
        <end position="1074"/>
    </location>
</feature>
<feature type="helix" evidence="13">
    <location>
        <begin position="1093"/>
        <end position="1103"/>
    </location>
</feature>
<feature type="helix" evidence="13">
    <location>
        <begin position="1111"/>
        <end position="1127"/>
    </location>
</feature>
<feature type="helix" evidence="13">
    <location>
        <begin position="1129"/>
        <end position="1133"/>
    </location>
</feature>
<feature type="helix" evidence="13">
    <location>
        <begin position="1135"/>
        <end position="1146"/>
    </location>
</feature>
<feature type="helix" evidence="13">
    <location>
        <begin position="1152"/>
        <end position="1174"/>
    </location>
</feature>
<feature type="strand" evidence="13">
    <location>
        <begin position="1179"/>
        <end position="1182"/>
    </location>
</feature>
<feature type="helix" evidence="13">
    <location>
        <begin position="1204"/>
        <end position="1211"/>
    </location>
</feature>
<feature type="helix" evidence="13">
    <location>
        <begin position="1213"/>
        <end position="1220"/>
    </location>
</feature>
<feature type="helix" evidence="13">
    <location>
        <begin position="1225"/>
        <end position="1241"/>
    </location>
</feature>
<feature type="helix" evidence="13">
    <location>
        <begin position="1246"/>
        <end position="1248"/>
    </location>
</feature>
<feature type="helix" evidence="13">
    <location>
        <begin position="1250"/>
        <end position="1257"/>
    </location>
</feature>
<feature type="helix" evidence="13">
    <location>
        <begin position="1262"/>
        <end position="1285"/>
    </location>
</feature>
<feature type="helix" evidence="13">
    <location>
        <begin position="1287"/>
        <end position="1301"/>
    </location>
</feature>
<feature type="strand" evidence="13">
    <location>
        <begin position="1303"/>
        <end position="1305"/>
    </location>
</feature>
<feature type="turn" evidence="13">
    <location>
        <begin position="1306"/>
        <end position="1308"/>
    </location>
</feature>
<feature type="helix" evidence="13">
    <location>
        <begin position="1313"/>
        <end position="1319"/>
    </location>
</feature>
<feature type="helix" evidence="13">
    <location>
        <begin position="1326"/>
        <end position="1340"/>
    </location>
</feature>
<feature type="helix" evidence="13">
    <location>
        <begin position="1356"/>
        <end position="1367"/>
    </location>
</feature>
<feature type="helix" evidence="13">
    <location>
        <begin position="1374"/>
        <end position="1397"/>
    </location>
</feature>
<feature type="helix" evidence="13">
    <location>
        <begin position="1414"/>
        <end position="1433"/>
    </location>
</feature>
<feature type="helix" evidence="13">
    <location>
        <begin position="1449"/>
        <end position="1453"/>
    </location>
</feature>
<feature type="helix" evidence="13">
    <location>
        <begin position="1467"/>
        <end position="1472"/>
    </location>
</feature>
<dbReference type="EMBL" id="Y14279">
    <property type="protein sequence ID" value="CAA74656.1"/>
    <property type="molecule type" value="Genomic_DNA"/>
</dbReference>
<dbReference type="EMBL" id="Z46727">
    <property type="protein sequence ID" value="CAA86687.1"/>
    <property type="molecule type" value="Genomic_DNA"/>
</dbReference>
<dbReference type="EMBL" id="BK006938">
    <property type="protein sequence ID" value="DAA12023.1"/>
    <property type="molecule type" value="Genomic_DNA"/>
</dbReference>
<dbReference type="PIR" id="S49777">
    <property type="entry name" value="S49777"/>
</dbReference>
<dbReference type="RefSeq" id="NP_010466.3">
    <property type="nucleotide sequence ID" value="NM_001180488.3"/>
</dbReference>
<dbReference type="PDB" id="4XDN">
    <property type="method" value="X-ray"/>
    <property type="resolution" value="2.08 A"/>
    <property type="chains" value="B=1-181"/>
</dbReference>
<dbReference type="PDB" id="5W94">
    <property type="method" value="X-ray"/>
    <property type="resolution" value="3.19 A"/>
    <property type="chains" value="B/D=1-181"/>
</dbReference>
<dbReference type="PDB" id="6ZZ6">
    <property type="method" value="EM"/>
    <property type="resolution" value="3.40 A"/>
    <property type="chains" value="D=1-1493"/>
</dbReference>
<dbReference type="PDBsum" id="4XDN"/>
<dbReference type="PDBsum" id="5W94"/>
<dbReference type="PDBsum" id="6ZZ6"/>
<dbReference type="EMDB" id="EMD-11585"/>
<dbReference type="SMR" id="Q04002"/>
<dbReference type="BioGRID" id="32234">
    <property type="interactions" value="1014"/>
</dbReference>
<dbReference type="ComplexPortal" id="CPX-1868">
    <property type="entry name" value="SCC2-SCC4 cohesin loader complex"/>
</dbReference>
<dbReference type="DIP" id="DIP-831N"/>
<dbReference type="FunCoup" id="Q04002">
    <property type="interactions" value="333"/>
</dbReference>
<dbReference type="IntAct" id="Q04002">
    <property type="interactions" value="2"/>
</dbReference>
<dbReference type="MINT" id="Q04002"/>
<dbReference type="STRING" id="4932.YDR180W"/>
<dbReference type="CarbonylDB" id="Q04002"/>
<dbReference type="iPTMnet" id="Q04002"/>
<dbReference type="PaxDb" id="4932-YDR180W"/>
<dbReference type="PeptideAtlas" id="Q04002"/>
<dbReference type="EnsemblFungi" id="YDR180W_mRNA">
    <property type="protein sequence ID" value="YDR180W"/>
    <property type="gene ID" value="YDR180W"/>
</dbReference>
<dbReference type="GeneID" id="851761"/>
<dbReference type="KEGG" id="sce:YDR180W"/>
<dbReference type="AGR" id="SGD:S000002588"/>
<dbReference type="SGD" id="S000002588">
    <property type="gene designation" value="SCC2"/>
</dbReference>
<dbReference type="VEuPathDB" id="FungiDB:YDR180W"/>
<dbReference type="eggNOG" id="KOG1020">
    <property type="taxonomic scope" value="Eukaryota"/>
</dbReference>
<dbReference type="GeneTree" id="ENSGT00390000010427"/>
<dbReference type="HOGENOM" id="CLU_259053_0_0_1"/>
<dbReference type="InParanoid" id="Q04002"/>
<dbReference type="OMA" id="FNSRHVL"/>
<dbReference type="OrthoDB" id="418242at2759"/>
<dbReference type="BioCyc" id="YEAST:G3O-29769-MONOMER"/>
<dbReference type="BioGRID-ORCS" id="851761">
    <property type="hits" value="1 hit in 10 CRISPR screens"/>
</dbReference>
<dbReference type="CD-CODE" id="5F622AE2">
    <property type="entry name" value="Synthetic Condensate 000372"/>
</dbReference>
<dbReference type="EvolutionaryTrace" id="Q04002"/>
<dbReference type="PRO" id="PR:Q04002"/>
<dbReference type="Proteomes" id="UP000002311">
    <property type="component" value="Chromosome IV"/>
</dbReference>
<dbReference type="RNAct" id="Q04002">
    <property type="molecule type" value="protein"/>
</dbReference>
<dbReference type="GO" id="GO:0005729">
    <property type="term" value="C:2-micrometer circle DNA"/>
    <property type="evidence" value="ECO:0000314"/>
    <property type="project" value="SGD"/>
</dbReference>
<dbReference type="GO" id="GO:0000785">
    <property type="term" value="C:chromatin"/>
    <property type="evidence" value="ECO:0000314"/>
    <property type="project" value="UniProtKB"/>
</dbReference>
<dbReference type="GO" id="GO:0000775">
    <property type="term" value="C:chromosome, centromeric region"/>
    <property type="evidence" value="ECO:0007669"/>
    <property type="project" value="UniProtKB-SubCell"/>
</dbReference>
<dbReference type="GO" id="GO:0005829">
    <property type="term" value="C:cytosol"/>
    <property type="evidence" value="ECO:0000314"/>
    <property type="project" value="SGD"/>
</dbReference>
<dbReference type="GO" id="GO:0005634">
    <property type="term" value="C:nucleus"/>
    <property type="evidence" value="ECO:0000314"/>
    <property type="project" value="SGD"/>
</dbReference>
<dbReference type="GO" id="GO:0090694">
    <property type="term" value="C:Scc2-Scc4 cohesin loading complex"/>
    <property type="evidence" value="ECO:0000318"/>
    <property type="project" value="GO_Central"/>
</dbReference>
<dbReference type="GO" id="GO:0032116">
    <property type="term" value="C:SMC loading complex"/>
    <property type="evidence" value="ECO:0000353"/>
    <property type="project" value="SGD"/>
</dbReference>
<dbReference type="GO" id="GO:0003682">
    <property type="term" value="F:chromatin binding"/>
    <property type="evidence" value="ECO:0000318"/>
    <property type="project" value="GO_Central"/>
</dbReference>
<dbReference type="GO" id="GO:0061775">
    <property type="term" value="F:cohesin loader activity"/>
    <property type="evidence" value="ECO:0007669"/>
    <property type="project" value="InterPro"/>
</dbReference>
<dbReference type="GO" id="GO:0043565">
    <property type="term" value="F:sequence-specific DNA binding"/>
    <property type="evidence" value="ECO:0000314"/>
    <property type="project" value="UniProtKB"/>
</dbReference>
<dbReference type="GO" id="GO:0140588">
    <property type="term" value="P:chromatin looping"/>
    <property type="evidence" value="ECO:0007669"/>
    <property type="project" value="InterPro"/>
</dbReference>
<dbReference type="GO" id="GO:0006302">
    <property type="term" value="P:double-strand break repair"/>
    <property type="evidence" value="ECO:0000315"/>
    <property type="project" value="SGD"/>
</dbReference>
<dbReference type="GO" id="GO:0034087">
    <property type="term" value="P:establishment of mitotic sister chromatid cohesion"/>
    <property type="evidence" value="ECO:0000314"/>
    <property type="project" value="ComplexPortal"/>
</dbReference>
<dbReference type="GO" id="GO:0071169">
    <property type="term" value="P:establishment of protein localization to chromatin"/>
    <property type="evidence" value="ECO:0000315"/>
    <property type="project" value="SGD"/>
</dbReference>
<dbReference type="GO" id="GO:0007076">
    <property type="term" value="P:mitotic chromosome condensation"/>
    <property type="evidence" value="ECO:0000315"/>
    <property type="project" value="SGD"/>
</dbReference>
<dbReference type="GO" id="GO:0007064">
    <property type="term" value="P:mitotic sister chromatid cohesion"/>
    <property type="evidence" value="ECO:0000314"/>
    <property type="project" value="UniProtKB"/>
</dbReference>
<dbReference type="GO" id="GO:0071168">
    <property type="term" value="P:protein localization to chromatin"/>
    <property type="evidence" value="ECO:0000315"/>
    <property type="project" value="SGD"/>
</dbReference>
<dbReference type="GO" id="GO:0070550">
    <property type="term" value="P:rDNA chromatin condensation"/>
    <property type="evidence" value="ECO:0000315"/>
    <property type="project" value="SGD"/>
</dbReference>
<dbReference type="GO" id="GO:0010468">
    <property type="term" value="P:regulation of gene expression"/>
    <property type="evidence" value="ECO:0000315"/>
    <property type="project" value="UniProtKB"/>
</dbReference>
<dbReference type="GO" id="GO:1990414">
    <property type="term" value="P:replication-born double-strand break repair via sister chromatid exchange"/>
    <property type="evidence" value="ECO:0000315"/>
    <property type="project" value="SGD"/>
</dbReference>
<dbReference type="GO" id="GO:0000972">
    <property type="term" value="P:transcription-dependent tethering of RNA polymerase II gene DNA at nuclear periphery"/>
    <property type="evidence" value="ECO:0000315"/>
    <property type="project" value="SGD"/>
</dbReference>
<dbReference type="GO" id="GO:0070058">
    <property type="term" value="P:tRNA gene clustering"/>
    <property type="evidence" value="ECO:0000315"/>
    <property type="project" value="SGD"/>
</dbReference>
<dbReference type="CDD" id="cd23958">
    <property type="entry name" value="SCC2"/>
    <property type="match status" value="1"/>
</dbReference>
<dbReference type="InterPro" id="IPR016024">
    <property type="entry name" value="ARM-type_fold"/>
</dbReference>
<dbReference type="InterPro" id="IPR026003">
    <property type="entry name" value="Cohesin_HEAT"/>
</dbReference>
<dbReference type="InterPro" id="IPR024986">
    <property type="entry name" value="Nipped-B_C"/>
</dbReference>
<dbReference type="InterPro" id="IPR033031">
    <property type="entry name" value="Scc2/Nipped-B"/>
</dbReference>
<dbReference type="PANTHER" id="PTHR21704:SF18">
    <property type="entry name" value="NIPPED-B-LIKE PROTEIN"/>
    <property type="match status" value="1"/>
</dbReference>
<dbReference type="PANTHER" id="PTHR21704">
    <property type="entry name" value="NIPPED-B-LIKE PROTEIN DELANGIN SCC2-RELATED"/>
    <property type="match status" value="1"/>
</dbReference>
<dbReference type="Pfam" id="PF12765">
    <property type="entry name" value="Cohesin_HEAT"/>
    <property type="match status" value="1"/>
</dbReference>
<dbReference type="Pfam" id="PF12830">
    <property type="entry name" value="Nipped-B_C"/>
    <property type="match status" value="1"/>
</dbReference>
<dbReference type="SUPFAM" id="SSF48371">
    <property type="entry name" value="ARM repeat"/>
    <property type="match status" value="1"/>
</dbReference>
<reference key="1">
    <citation type="journal article" date="1997" name="Cell">
        <title>Cohesins: chromosomal proteins that prevent premature separation of sister chromatids.</title>
        <authorList>
            <person name="Michaelis C."/>
            <person name="Ciosk R."/>
            <person name="Nasmyth K."/>
        </authorList>
    </citation>
    <scope>NUCLEOTIDE SEQUENCE [GENOMIC DNA]</scope>
    <source>
        <strain>ATCC 200060 / W303</strain>
    </source>
</reference>
<reference key="2">
    <citation type="journal article" date="1997" name="Nature">
        <title>The nucleotide sequence of Saccharomyces cerevisiae chromosome IV.</title>
        <authorList>
            <person name="Jacq C."/>
            <person name="Alt-Moerbe J."/>
            <person name="Andre B."/>
            <person name="Arnold W."/>
            <person name="Bahr A."/>
            <person name="Ballesta J.P.G."/>
            <person name="Bargues M."/>
            <person name="Baron L."/>
            <person name="Becker A."/>
            <person name="Biteau N."/>
            <person name="Bloecker H."/>
            <person name="Blugeon C."/>
            <person name="Boskovic J."/>
            <person name="Brandt P."/>
            <person name="Brueckner M."/>
            <person name="Buitrago M.J."/>
            <person name="Coster F."/>
            <person name="Delaveau T."/>
            <person name="del Rey F."/>
            <person name="Dujon B."/>
            <person name="Eide L.G."/>
            <person name="Garcia-Cantalejo J.M."/>
            <person name="Goffeau A."/>
            <person name="Gomez-Peris A."/>
            <person name="Granotier C."/>
            <person name="Hanemann V."/>
            <person name="Hankeln T."/>
            <person name="Hoheisel J.D."/>
            <person name="Jaeger W."/>
            <person name="Jimenez A."/>
            <person name="Jonniaux J.-L."/>
            <person name="Kraemer C."/>
            <person name="Kuester H."/>
            <person name="Laamanen P."/>
            <person name="Legros Y."/>
            <person name="Louis E.J."/>
            <person name="Moeller-Rieker S."/>
            <person name="Monnet A."/>
            <person name="Moro M."/>
            <person name="Mueller-Auer S."/>
            <person name="Nussbaumer B."/>
            <person name="Paricio N."/>
            <person name="Paulin L."/>
            <person name="Perea J."/>
            <person name="Perez-Alonso M."/>
            <person name="Perez-Ortin J.E."/>
            <person name="Pohl T.M."/>
            <person name="Prydz H."/>
            <person name="Purnelle B."/>
            <person name="Rasmussen S.W."/>
            <person name="Remacha M.A."/>
            <person name="Revuelta J.L."/>
            <person name="Rieger M."/>
            <person name="Salom D."/>
            <person name="Saluz H.P."/>
            <person name="Saiz J.E."/>
            <person name="Saren A.-M."/>
            <person name="Schaefer M."/>
            <person name="Scharfe M."/>
            <person name="Schmidt E.R."/>
            <person name="Schneider C."/>
            <person name="Scholler P."/>
            <person name="Schwarz S."/>
            <person name="Soler-Mira A."/>
            <person name="Urrestarazu L.A."/>
            <person name="Verhasselt P."/>
            <person name="Vissers S."/>
            <person name="Voet M."/>
            <person name="Volckaert G."/>
            <person name="Wagner G."/>
            <person name="Wambutt R."/>
            <person name="Wedler E."/>
            <person name="Wedler H."/>
            <person name="Woelfl S."/>
            <person name="Harris D.E."/>
            <person name="Bowman S."/>
            <person name="Brown D."/>
            <person name="Churcher C.M."/>
            <person name="Connor R."/>
            <person name="Dedman K."/>
            <person name="Gentles S."/>
            <person name="Hamlin N."/>
            <person name="Hunt S."/>
            <person name="Jones L."/>
            <person name="McDonald S."/>
            <person name="Murphy L.D."/>
            <person name="Niblett D."/>
            <person name="Odell C."/>
            <person name="Oliver K."/>
            <person name="Rajandream M.A."/>
            <person name="Richards C."/>
            <person name="Shore L."/>
            <person name="Walsh S.V."/>
            <person name="Barrell B.G."/>
            <person name="Dietrich F.S."/>
            <person name="Mulligan J.T."/>
            <person name="Allen E."/>
            <person name="Araujo R."/>
            <person name="Aviles E."/>
            <person name="Berno A."/>
            <person name="Carpenter J."/>
            <person name="Chen E."/>
            <person name="Cherry J.M."/>
            <person name="Chung E."/>
            <person name="Duncan M."/>
            <person name="Hunicke-Smith S."/>
            <person name="Hyman R.W."/>
            <person name="Komp C."/>
            <person name="Lashkari D."/>
            <person name="Lew H."/>
            <person name="Lin D."/>
            <person name="Mosedale D."/>
            <person name="Nakahara K."/>
            <person name="Namath A."/>
            <person name="Oefner P."/>
            <person name="Oh C."/>
            <person name="Petel F.X."/>
            <person name="Roberts D."/>
            <person name="Schramm S."/>
            <person name="Schroeder M."/>
            <person name="Shogren T."/>
            <person name="Shroff N."/>
            <person name="Winant A."/>
            <person name="Yelton M.A."/>
            <person name="Botstein D."/>
            <person name="Davis R.W."/>
            <person name="Johnston M."/>
            <person name="Andrews S."/>
            <person name="Brinkman R."/>
            <person name="Cooper J."/>
            <person name="Ding H."/>
            <person name="Du Z."/>
            <person name="Favello A."/>
            <person name="Fulton L."/>
            <person name="Gattung S."/>
            <person name="Greco T."/>
            <person name="Hallsworth K."/>
            <person name="Hawkins J."/>
            <person name="Hillier L.W."/>
            <person name="Jier M."/>
            <person name="Johnson D."/>
            <person name="Johnston L."/>
            <person name="Kirsten J."/>
            <person name="Kucaba T."/>
            <person name="Langston Y."/>
            <person name="Latreille P."/>
            <person name="Le T."/>
            <person name="Mardis E."/>
            <person name="Menezes S."/>
            <person name="Miller N."/>
            <person name="Nhan M."/>
            <person name="Pauley A."/>
            <person name="Peluso D."/>
            <person name="Rifkin L."/>
            <person name="Riles L."/>
            <person name="Taich A."/>
            <person name="Trevaskis E."/>
            <person name="Vignati D."/>
            <person name="Wilcox L."/>
            <person name="Wohldman P."/>
            <person name="Vaudin M."/>
            <person name="Wilson R."/>
            <person name="Waterston R."/>
            <person name="Albermann K."/>
            <person name="Hani J."/>
            <person name="Heumann K."/>
            <person name="Kleine K."/>
            <person name="Mewes H.-W."/>
            <person name="Zollner A."/>
            <person name="Zaccaria P."/>
        </authorList>
    </citation>
    <scope>NUCLEOTIDE SEQUENCE [LARGE SCALE GENOMIC DNA]</scope>
    <source>
        <strain>ATCC 204508 / S288c</strain>
    </source>
</reference>
<reference key="3">
    <citation type="journal article" date="2014" name="G3 (Bethesda)">
        <title>The reference genome sequence of Saccharomyces cerevisiae: Then and now.</title>
        <authorList>
            <person name="Engel S.R."/>
            <person name="Dietrich F.S."/>
            <person name="Fisk D.G."/>
            <person name="Binkley G."/>
            <person name="Balakrishnan R."/>
            <person name="Costanzo M.C."/>
            <person name="Dwight S.S."/>
            <person name="Hitz B.C."/>
            <person name="Karra K."/>
            <person name="Nash R.S."/>
            <person name="Weng S."/>
            <person name="Wong E.D."/>
            <person name="Lloyd P."/>
            <person name="Skrzypek M.S."/>
            <person name="Miyasato S.R."/>
            <person name="Simison M."/>
            <person name="Cherry J.M."/>
        </authorList>
    </citation>
    <scope>GENOME REANNOTATION</scope>
    <source>
        <strain>ATCC 204508 / S288c</strain>
    </source>
</reference>
<reference key="4">
    <citation type="journal article" date="1999" name="Genes Dev.">
        <title>Yeast cohesin complex requires a conserved protein, Eco1p(Ctf7), to establish cohesion between sister chromatids during DNA replication.</title>
        <authorList>
            <person name="Toth A."/>
            <person name="Ciosk R."/>
            <person name="Uhlmann F."/>
            <person name="Galova M."/>
            <person name="Schleiffer A."/>
            <person name="Nasmyth K."/>
        </authorList>
    </citation>
    <scope>INTERACTION WITH THE COHESIN COMPLEX</scope>
    <scope>FUNCTION</scope>
</reference>
<reference key="5">
    <citation type="journal article" date="2000" name="Mol. Cell">
        <title>Cohesin's binding to chromosomes depends on a separate complex consisting of Scc2 and Scc4 proteins.</title>
        <authorList>
            <person name="Ciosk R."/>
            <person name="Shirayama M."/>
            <person name="Shevchenko A."/>
            <person name="Tanaka T."/>
            <person name="Toth A."/>
            <person name="Shevchenko A."/>
            <person name="Nasmyth K."/>
        </authorList>
    </citation>
    <scope>FUNCTION</scope>
    <scope>INTERACTION WITH SCC4</scope>
    <scope>SUBCELLULAR LOCATION</scope>
</reference>
<reference key="6">
    <citation type="journal article" date="2003" name="Curr. Biol.">
        <title>ATP hydrolysis is required for cohesin's association with chromosomes.</title>
        <authorList>
            <person name="Arumugam P."/>
            <person name="Gruber S."/>
            <person name="Tanaka K."/>
            <person name="Haering C.H."/>
            <person name="Mechtler K."/>
            <person name="Nasmyth K."/>
        </authorList>
    </citation>
    <scope>FUNCTION</scope>
</reference>
<reference key="7">
    <citation type="journal article" date="2003" name="Nature">
        <title>Global analysis of protein expression in yeast.</title>
        <authorList>
            <person name="Ghaemmaghami S."/>
            <person name="Huh W.-K."/>
            <person name="Bower K."/>
            <person name="Howson R.W."/>
            <person name="Belle A."/>
            <person name="Dephoure N."/>
            <person name="O'Shea E.K."/>
            <person name="Weissman J.S."/>
        </authorList>
    </citation>
    <scope>LEVEL OF PROTEIN EXPRESSION [LARGE SCALE ANALYSIS]</scope>
</reference>
<reference key="8">
    <citation type="journal article" date="2014" name="Nat. Genet.">
        <title>The Scc2-Scc4 complex acts in sister chromatid cohesion and transcriptional regulation by maintaining nucleosome-free regions.</title>
        <authorList>
            <person name="Lopez-Serra L."/>
            <person name="Kelly G."/>
            <person name="Patel H."/>
            <person name="Stewart A."/>
            <person name="Uhlmann F."/>
        </authorList>
    </citation>
    <scope>FUNCTION</scope>
    <scope>SUBCELLULAR LOCATION</scope>
    <source>
        <strain evidence="9">ATCC 200060 / W303</strain>
    </source>
</reference>
<reference key="9">
    <citation type="journal article" date="2015" name="Mol. Biol. Cell">
        <title>Phosphorylation of the Scc2 cohesin deposition complex subunit regulates chromosome condensation through cohesin integrity.</title>
        <authorList>
            <person name="Woodman J."/>
            <person name="Hoffman M."/>
            <person name="Dzieciatkowska M."/>
            <person name="Hansen K.C."/>
            <person name="Megee P.C."/>
        </authorList>
    </citation>
    <scope>FUNCTION</scope>
    <scope>PHOSPHORYLATION AT SER-43; THR-67; SER-74; SER-127; SER-157; SER-162; SER-163; THR-231; THR-236; SER-305; SER-320; THR-360; SER-753; SER-1179; SER-1182; SER-1183 AND SER-1185</scope>
    <scope>MUTAGENESIS OF THR-67; SER-127; SER-157; SER-163; THR-231; THR-236; SER-305; SER-320; SER-753; SER-1182 AND SER-1185</scope>
</reference>
<reference key="10">
    <citation type="journal article" date="2015" name="Elife">
        <title>Structural evidence for Scc4-dependent localization of cohesin loading.</title>
        <authorList>
            <person name="Hinshaw S.M."/>
            <person name="Makrantoni V."/>
            <person name="Kerr A."/>
            <person name="Marston A.L."/>
            <person name="Harrison S.C."/>
        </authorList>
    </citation>
    <scope>X-RAY CRYSTALLOGRAPHY (2.08 ANGSTROMS) OF 1-181 IN COMPLEX WITH SCC4</scope>
    <scope>DOMAIN</scope>
    <scope>SUBCELLULAR LOCATION</scope>
</reference>
<accession>Q04002</accession>
<accession>D6VSG3</accession>
<protein>
    <recommendedName>
        <fullName>Sister chromatid cohesion protein 2</fullName>
    </recommendedName>
</protein>
<sequence>MSYPGKDKNIPGRIIEALEDLPLSYLVPKDGLAALVNAPMRVSLPFDKTIFTSADDGRDVNINVLGTANSTTSSIKNEAEKERLVFKRPSNFTSSANSVDYVPTNFLEGLSPLAQSVLSTHKGLNDSINIEKKSEIVSRPEAKHKLESVTSNAGNLSFNDNSSNKKTKTSTGVTMTQANLAEQYLNDLKNILDIVGFDQNSAEIGNIEYWLQLPNKKFVLTTNCLTKLQMTIKNITDNPQLSNSIEITWLLRLLDVMVCNIKFSKSSLKMGLDDSMLRYIALLSTIVLFNIFLLGKNDSNLHRESYIMEPVNFLSDLIESLKILTIEYGSLKIEFDTFQEALELLPKYIRNGPFLDDNVTAKLVYIFSDLLMNNDIEATTNIQFQSFWDNVKRISSDILVSLFGSFDQQRGFIIEELLSHIEKLPTKRIQKKLRKVGNQNIYITDFTFTLMSMLENINCYSFCNQMKDIAPENIDLLKNEYKKQEEFLFNIVEHINDTILERFFKNPSALRYVIDNFVQDLLLLISSPQWPVTEKILSSLLKRLLSVYSPSMQVSANIETICLQLIGNIGSTIFDIKCSTRDHEDNNLIKMINYPETLPHFFKSFEECIAYNETIKCRRSATRFLWNLRLGTILILEEYTKDAKEQIITVDNELKKILEQIKDGGLGPELENREADFSTIKLDYFSILHAFELLNLYDPYLKLILSLLAKDKIKLRSTAIKCLSMLASKDKVILSNPMVKETIHRRLNDSSASVKDAILDLVSINSSYFEFYQQINNNYNDDSIMVRKHVLRINEKMYDETNDIVTKVYVIARILMKIEDEEDNIIDMARLILLNRWILKVHEVLDQPEKLKEISSSVLLVMSRVAIMNEKCSQLFDLFLNFYLLNKEAHSKEAYDKITHVLTILTDFLVQKIVELNSDDTNEKNSIVDKQNFLNLLAKFADSTVSFLTKDHITALYPYMVSDEKSDFHYYILQVFRCTFEKLANFKQKFLYDLETTLLSRLPKMNVREIDEAMPLIWSVATHRHDTARVAKACSSCLSHLHPYINKANNEEAAIVVDGKLQRLIYLSTGFARFCFPKPSNDKIAFLQEGETLYEHITKCLLVLSKDKITHVIRRVAVKNLTKLCGNHPKLFNSRHVLHLLDKEFQSDQLDIKLVILESLYDLFLLEERKSVRNTGVNSTLSSNSILKKKLLKTNRVEFANDGVCSALATRFLDNILQLCLLRDLKNSLVAIRLLKLILKFGYTNPSHSIPTVIALFASTSQYIRHVAYELLEDLFEKYETLVFSSLSRGVTKAIHYSIHTDEKYYYKHDHFLSLLEKLCGTGKKNGPKFFKVLKRIMQSYLDDITDLTSTNSSVQKSIFVLCTNISNITFVSQYDLVSLLKTIDLTTDRLKEVIMDEIGDNVSSLSVSEEKLSGIILIQLSLQDLGTYLLHLYGLRDDVLLLDIVEESELKNKQLPAKKPDISKFSAQLENIEQYSSNGKLLTYFRKHVKDT</sequence>
<name>SCC2_YEAST</name>
<keyword id="KW-0002">3D-structure</keyword>
<keyword id="KW-0131">Cell cycle</keyword>
<keyword id="KW-0137">Centromere</keyword>
<keyword id="KW-0158">Chromosome</keyword>
<keyword id="KW-0539">Nucleus</keyword>
<keyword id="KW-0597">Phosphoprotein</keyword>
<keyword id="KW-1185">Reference proteome</keyword>
<keyword id="KW-0677">Repeat</keyword>
<keyword id="KW-0804">Transcription</keyword>
<keyword id="KW-0805">Transcription regulation</keyword>
<gene>
    <name type="primary">SCC2</name>
    <name type="ordered locus">YDR180W</name>
    <name type="ORF">YD9395.14</name>
</gene>
<comment type="function">
    <text evidence="2 4 5 7 8">Plays a structural role in chromatin and is involved in sister chromatid cohesion (PubMed:14614819, PubMed:25173104, PubMed:26354421, PubMed:9990856). Forms a complex with SCC4 required for the stable association of the cohesin complex with chromatin, which may act by hydrolyzing ATP from SMC1 and SMC3 heads (PubMed:10882066, PubMed:14614819). Binds to the nucleosome-free promoter regions of ribosomal protein genes and tRNA genes. Involved in transcriptional regulation by cooperating with the RSC complex to maintain nucleosome exhaustion at its binding sites (PubMed:25173104).</text>
</comment>
<comment type="subunit">
    <text evidence="2 6 8">Interacts with SCC4 (PubMed:10882066, PubMed:26038942, PubMed:9990856). Interacts with the cohesin complex, which is composed of: the SMC1 and SMC3 heterodimer attached via their hinge domain, MCD1/SCC1 which link them, and IRR1/SCC3, which interacts with MCD1 (PubMed:9990856).</text>
</comment>
<comment type="interaction">
    <interactant intactId="EBI-16662">
        <id>Q04002</id>
    </interactant>
    <interactant intactId="EBI-16679">
        <id>P40090</id>
        <label>SCC4</label>
    </interactant>
    <organismsDiffer>false</organismsDiffer>
    <experiments>6</experiments>
</comment>
<comment type="subcellular location">
    <subcellularLocation>
        <location evidence="2 5 6">Nucleus</location>
    </subcellularLocation>
    <subcellularLocation>
        <location evidence="6">Chromosome</location>
        <location evidence="6">Centromere</location>
    </subcellularLocation>
    <text evidence="2 5 6">Associates with chromatin.</text>
</comment>
<comment type="domain">
    <text evidence="6">The N-terminus (residues 1-181) is sufficient for the interaction with SCC4 (PubMed:26038942).</text>
</comment>
<comment type="PTM">
    <text evidence="7">Phosphorylated at alternative sites Ser-43, Ser-74, Ser-162, Thr-360, Ser-1179 and Ser-1183 when the principal phosphorylation sites Thr-67, Ser-127, Ser-157, Ser-163, Thr-231, Thr-236, Ser-305 and Ser-320 are mutated to alanines.</text>
</comment>
<comment type="miscellaneous">
    <text evidence="3">Present with 3310 molecules/cell in log phase SD medium.</text>
</comment>
<comment type="similarity">
    <text evidence="10">Belongs to the SCC2/Nipped-B family.</text>
</comment>
<proteinExistence type="evidence at protein level"/>
<organism>
    <name type="scientific">Saccharomyces cerevisiae (strain ATCC 204508 / S288c)</name>
    <name type="common">Baker's yeast</name>
    <dbReference type="NCBI Taxonomy" id="559292"/>
    <lineage>
        <taxon>Eukaryota</taxon>
        <taxon>Fungi</taxon>
        <taxon>Dikarya</taxon>
        <taxon>Ascomycota</taxon>
        <taxon>Saccharomycotina</taxon>
        <taxon>Saccharomycetes</taxon>
        <taxon>Saccharomycetales</taxon>
        <taxon>Saccharomycetaceae</taxon>
        <taxon>Saccharomyces</taxon>
    </lineage>
</organism>